<name>PYNC_ASPNC</name>
<protein>
    <recommendedName>
        <fullName evidence="5">Methyltransferase pynC</fullName>
        <ecNumber evidence="4">2.1.1.-</ecNumber>
    </recommendedName>
    <alternativeName>
        <fullName evidence="5">Pyranonigrin biosynthesis cluster protein C</fullName>
    </alternativeName>
</protein>
<gene>
    <name evidence="5" type="primary">pynC</name>
    <name type="ORF">An11g00280</name>
</gene>
<comment type="function">
    <text evidence="3 4 7">Methyltransferase; part of the gene cluster that mediates the biosynthesis of pyranonigrins, a family of antioxidative compounds (PubMed:24106156, PubMed:26414728). The first step of pyranonigrins biosynthesis is performed by the hybrid PKS-NRPS synthetase that condenses 6 malonyl-CoA units to an acetyl starter unit, to form a 1,3,5-trioxotetradecane-6,8-dienyl-ACP (PubMed:24106156). The enoyl reductase (ER) domain of pynA is likely to be functional during the first two rounds of polyketide chain extension, to generate the saturated C-C bonds of the alkyl side chain (Probable). PynA subsequently forms the amide bond between the acyl chain and L-serine (PubMed:24106156, PubMed:26414728). Although pynA has a terminal reductase domain, it appears to require the thioesterase pynI for the release of the straight-chain intermediate from pynA via the formation of a tetramic acid pyranonigrin J (PubMed:26414728). The methyltransferase pynC then coverts pyranonigrin J to pyranonigrin I via N-methylation (PubMed:26414728). The FAD-dependent monooxygenase pynG catalyzes an epoxidation-mediated cyclization to form the dihydro-gamma-pyrone moiety, followed by pynD-catalyzed oxidation of the alcohol to the ketone and enolization to yield the characteristic tetramic acid-fused gamma-pyrone core of pyranonigrin H (PubMed:26414728). Pyranonigrin H is substrate of pynH for dehydration-mediated exo-methylene formation from the serine side chain to produce pyranonigrin E, before the oxidase pynE reduces the exo-methylene of pyranonigrin E into a pendant methyl to form pyranonigrin G (PubMed:26414728). The FAD-linked oxidoreductase pynB performs the reverse reaction and converts pyranonigrin G back to pyranonigrin E (PubMed:26414728).</text>
</comment>
<comment type="pathway">
    <text evidence="4">Secondary metabolite biosynthesis.</text>
</comment>
<comment type="induction">
    <text evidence="3">Expression is positively regulated by the cluster-specific transcription factor pynR.</text>
</comment>
<comment type="disruption phenotype">
    <text evidence="4">Leads to a small accumulation of pyranonigrin J and the formation of a desmethylated product pyranonigrin K.</text>
</comment>
<comment type="similarity">
    <text evidence="6">Belongs to the class I-like SAM-binding methyltransferase superfamily. Cation-independent O-methyltransferase family.</text>
</comment>
<proteinExistence type="evidence at protein level"/>
<accession>A5ABG3</accession>
<evidence type="ECO:0000250" key="1">
    <source>
        <dbReference type="UniProtKB" id="O04385"/>
    </source>
</evidence>
<evidence type="ECO:0000255" key="2">
    <source>
        <dbReference type="PROSITE-ProRule" id="PRU01020"/>
    </source>
</evidence>
<evidence type="ECO:0000269" key="3">
    <source>
    </source>
</evidence>
<evidence type="ECO:0000269" key="4">
    <source>
    </source>
</evidence>
<evidence type="ECO:0000303" key="5">
    <source>
    </source>
</evidence>
<evidence type="ECO:0000305" key="6"/>
<evidence type="ECO:0000305" key="7">
    <source>
    </source>
</evidence>
<dbReference type="EC" id="2.1.1.-" evidence="4"/>
<dbReference type="EMBL" id="AM270218">
    <property type="protein sequence ID" value="CAK48261.1"/>
    <property type="molecule type" value="Genomic_DNA"/>
</dbReference>
<dbReference type="RefSeq" id="XP_001394032.1">
    <property type="nucleotide sequence ID" value="XM_001393995.1"/>
</dbReference>
<dbReference type="SMR" id="A5ABG3"/>
<dbReference type="EnsemblFungi" id="CAK48261">
    <property type="protein sequence ID" value="CAK48261"/>
    <property type="gene ID" value="An11g00280"/>
</dbReference>
<dbReference type="GeneID" id="4984229"/>
<dbReference type="KEGG" id="ang:An11g00280"/>
<dbReference type="VEuPathDB" id="FungiDB:An11g00280"/>
<dbReference type="HOGENOM" id="CLU_005533_5_2_1"/>
<dbReference type="Proteomes" id="UP000006706">
    <property type="component" value="Chromosome 7R"/>
</dbReference>
<dbReference type="GO" id="GO:0008171">
    <property type="term" value="F:O-methyltransferase activity"/>
    <property type="evidence" value="ECO:0007669"/>
    <property type="project" value="InterPro"/>
</dbReference>
<dbReference type="GO" id="GO:0032259">
    <property type="term" value="P:methylation"/>
    <property type="evidence" value="ECO:0007669"/>
    <property type="project" value="UniProtKB-KW"/>
</dbReference>
<dbReference type="GO" id="GO:0019748">
    <property type="term" value="P:secondary metabolic process"/>
    <property type="evidence" value="ECO:0000317"/>
    <property type="project" value="AspGD"/>
</dbReference>
<dbReference type="GO" id="GO:0044550">
    <property type="term" value="P:secondary metabolite biosynthetic process"/>
    <property type="evidence" value="ECO:0007669"/>
    <property type="project" value="UniProtKB-ARBA"/>
</dbReference>
<dbReference type="FunFam" id="1.10.10.10:FF:001080">
    <property type="entry name" value="S-adenosyl-L-methionine-dependent methyltransferase"/>
    <property type="match status" value="1"/>
</dbReference>
<dbReference type="FunFam" id="3.40.50.150:FF:000647">
    <property type="entry name" value="S-adenosyl-L-methionine-dependent methyltransferase"/>
    <property type="match status" value="1"/>
</dbReference>
<dbReference type="Gene3D" id="3.40.50.150">
    <property type="entry name" value="Vaccinia Virus protein VP39"/>
    <property type="match status" value="1"/>
</dbReference>
<dbReference type="Gene3D" id="1.10.10.10">
    <property type="entry name" value="Winged helix-like DNA-binding domain superfamily/Winged helix DNA-binding domain"/>
    <property type="match status" value="1"/>
</dbReference>
<dbReference type="InterPro" id="IPR016461">
    <property type="entry name" value="COMT-like"/>
</dbReference>
<dbReference type="InterPro" id="IPR001077">
    <property type="entry name" value="O_MeTrfase_dom"/>
</dbReference>
<dbReference type="InterPro" id="IPR029063">
    <property type="entry name" value="SAM-dependent_MTases_sf"/>
</dbReference>
<dbReference type="InterPro" id="IPR036388">
    <property type="entry name" value="WH-like_DNA-bd_sf"/>
</dbReference>
<dbReference type="InterPro" id="IPR036390">
    <property type="entry name" value="WH_DNA-bd_sf"/>
</dbReference>
<dbReference type="PANTHER" id="PTHR43712:SF16">
    <property type="entry name" value="O-METHYLTRANSFERASE ELCB"/>
    <property type="match status" value="1"/>
</dbReference>
<dbReference type="PANTHER" id="PTHR43712">
    <property type="entry name" value="PUTATIVE (AFU_ORTHOLOGUE AFUA_4G14580)-RELATED"/>
    <property type="match status" value="1"/>
</dbReference>
<dbReference type="Pfam" id="PF00891">
    <property type="entry name" value="Methyltransf_2"/>
    <property type="match status" value="1"/>
</dbReference>
<dbReference type="PIRSF" id="PIRSF005739">
    <property type="entry name" value="O-mtase"/>
    <property type="match status" value="1"/>
</dbReference>
<dbReference type="SUPFAM" id="SSF53335">
    <property type="entry name" value="S-adenosyl-L-methionine-dependent methyltransferases"/>
    <property type="match status" value="1"/>
</dbReference>
<dbReference type="SUPFAM" id="SSF46785">
    <property type="entry name" value="Winged helix' DNA-binding domain"/>
    <property type="match status" value="1"/>
</dbReference>
<dbReference type="PROSITE" id="PS51683">
    <property type="entry name" value="SAM_OMT_II"/>
    <property type="match status" value="1"/>
</dbReference>
<organism>
    <name type="scientific">Aspergillus niger (strain ATCC MYA-4892 / CBS 513.88 / FGSC A1513)</name>
    <dbReference type="NCBI Taxonomy" id="425011"/>
    <lineage>
        <taxon>Eukaryota</taxon>
        <taxon>Fungi</taxon>
        <taxon>Dikarya</taxon>
        <taxon>Ascomycota</taxon>
        <taxon>Pezizomycotina</taxon>
        <taxon>Eurotiomycetes</taxon>
        <taxon>Eurotiomycetidae</taxon>
        <taxon>Eurotiales</taxon>
        <taxon>Aspergillaceae</taxon>
        <taxon>Aspergillus</taxon>
        <taxon>Aspergillus subgen. Circumdati</taxon>
    </lineage>
</organism>
<keyword id="KW-0489">Methyltransferase</keyword>
<keyword id="KW-1185">Reference proteome</keyword>
<keyword id="KW-0949">S-adenosyl-L-methionine</keyword>
<keyword id="KW-0808">Transferase</keyword>
<feature type="chain" id="PRO_0000450057" description="Methyltransferase pynC">
    <location>
        <begin position="1"/>
        <end position="363"/>
    </location>
</feature>
<feature type="binding site" evidence="1">
    <location>
        <begin position="199"/>
        <end position="200"/>
    </location>
    <ligand>
        <name>S-adenosyl-L-methionine</name>
        <dbReference type="ChEBI" id="CHEBI:59789"/>
    </ligand>
</feature>
<feature type="binding site" evidence="2">
    <location>
        <position position="225"/>
    </location>
    <ligand>
        <name>S-adenosyl-L-methionine</name>
        <dbReference type="ChEBI" id="CHEBI:59789"/>
    </ligand>
</feature>
<feature type="binding site" evidence="1">
    <location>
        <begin position="254"/>
        <end position="255"/>
    </location>
    <ligand>
        <name>S-adenosyl-L-methionine</name>
        <dbReference type="ChEBI" id="CHEBI:59789"/>
    </ligand>
</feature>
<feature type="binding site" evidence="1">
    <location>
        <position position="270"/>
    </location>
    <ligand>
        <name>S-adenosyl-L-methionine</name>
        <dbReference type="ChEBI" id="CHEBI:59789"/>
    </ligand>
</feature>
<feature type="binding site" evidence="2">
    <location>
        <position position="271"/>
    </location>
    <ligand>
        <name>S-adenosyl-L-methionine</name>
        <dbReference type="ChEBI" id="CHEBI:59789"/>
    </ligand>
</feature>
<sequence length="363" mass="40300">MSPSTINPESSPLHTYYFSMVEMSIMKLFLDHKIFTLIPTTPGASIPVTTLTTTLNASPSLLTRLTNFLIASGVLSSPQPGHIAHTPKSLQFTDPTSYQALFFAHIFDFFLVPAVKWPGYMAEHGLNEPTSASRTPFGYAAGYPDKTLYEILETMPKRAAQFNATMAASFQPMPVLGMYDFSWIEKLADEERMAIVDVGGGKGQALKEILGAYPGIRPEQCVLFDVDDVIREAVAEAERDDDETWRTVRKIPGSFFSEQPVKGAAVYHIRRVLNDWPDEDCVTILRRIRDAAAPNSRVLISEQILQEEPSLAVAALDLWMLNFGGKRRSEGMFGELAQRTGWKVNGVFRDKESDTGVVELVVA</sequence>
<reference key="1">
    <citation type="journal article" date="2007" name="Nat. Biotechnol.">
        <title>Genome sequencing and analysis of the versatile cell factory Aspergillus niger CBS 513.88.</title>
        <authorList>
            <person name="Pel H.J."/>
            <person name="de Winde J.H."/>
            <person name="Archer D.B."/>
            <person name="Dyer P.S."/>
            <person name="Hofmann G."/>
            <person name="Schaap P.J."/>
            <person name="Turner G."/>
            <person name="de Vries R.P."/>
            <person name="Albang R."/>
            <person name="Albermann K."/>
            <person name="Andersen M.R."/>
            <person name="Bendtsen J.D."/>
            <person name="Benen J.A.E."/>
            <person name="van den Berg M."/>
            <person name="Breestraat S."/>
            <person name="Caddick M.X."/>
            <person name="Contreras R."/>
            <person name="Cornell M."/>
            <person name="Coutinho P.M."/>
            <person name="Danchin E.G.J."/>
            <person name="Debets A.J.M."/>
            <person name="Dekker P."/>
            <person name="van Dijck P.W.M."/>
            <person name="van Dijk A."/>
            <person name="Dijkhuizen L."/>
            <person name="Driessen A.J.M."/>
            <person name="d'Enfert C."/>
            <person name="Geysens S."/>
            <person name="Goosen C."/>
            <person name="Groot G.S.P."/>
            <person name="de Groot P.W.J."/>
            <person name="Guillemette T."/>
            <person name="Henrissat B."/>
            <person name="Herweijer M."/>
            <person name="van den Hombergh J.P.T.W."/>
            <person name="van den Hondel C.A.M.J.J."/>
            <person name="van der Heijden R.T.J.M."/>
            <person name="van der Kaaij R.M."/>
            <person name="Klis F.M."/>
            <person name="Kools H.J."/>
            <person name="Kubicek C.P."/>
            <person name="van Kuyk P.A."/>
            <person name="Lauber J."/>
            <person name="Lu X."/>
            <person name="van der Maarel M.J.E.C."/>
            <person name="Meulenberg R."/>
            <person name="Menke H."/>
            <person name="Mortimer M.A."/>
            <person name="Nielsen J."/>
            <person name="Oliver S.G."/>
            <person name="Olsthoorn M."/>
            <person name="Pal K."/>
            <person name="van Peij N.N.M.E."/>
            <person name="Ram A.F.J."/>
            <person name="Rinas U."/>
            <person name="Roubos J.A."/>
            <person name="Sagt C.M.J."/>
            <person name="Schmoll M."/>
            <person name="Sun J."/>
            <person name="Ussery D."/>
            <person name="Varga J."/>
            <person name="Vervecken W."/>
            <person name="van de Vondervoort P.J.J."/>
            <person name="Wedler H."/>
            <person name="Woesten H.A.B."/>
            <person name="Zeng A.-P."/>
            <person name="van Ooyen A.J.J."/>
            <person name="Visser J."/>
            <person name="Stam H."/>
        </authorList>
    </citation>
    <scope>NUCLEOTIDE SEQUENCE [LARGE SCALE GENOMIC DNA]</scope>
    <source>
        <strain>ATCC MYA-4892 / CBS 513.88 / FGSC A1513</strain>
    </source>
</reference>
<reference key="2">
    <citation type="journal article" date="2013" name="ChemBioChem">
        <title>Pyranonigrin E: a PKS-NRPS hybrid metabolite from Aspergillus niger identified by genome mining.</title>
        <authorList>
            <person name="Awakawa T."/>
            <person name="Yang X.L."/>
            <person name="Wakimoto T."/>
            <person name="Abe I."/>
        </authorList>
    </citation>
    <scope>FUNCTION</scope>
    <scope>INDUCTION</scope>
</reference>
<reference key="3">
    <citation type="journal article" date="2015" name="Org. Lett.">
        <title>Elucidation of pyranonigrin biosynthetic pathway reveals a mode of tetramic acid, fused gamma-pyrone, and exo-methylene formation.</title>
        <authorList>
            <person name="Yamamoto T."/>
            <person name="Tsunematsu Y."/>
            <person name="Noguchi H."/>
            <person name="Hotta K."/>
            <person name="Watanabe K."/>
        </authorList>
    </citation>
    <scope>FUNCTION</scope>
    <scope>DISRUPTION PHENOTYPE</scope>
    <scope>CATALYTIC ACTIVITY</scope>
    <scope>PATHWAY</scope>
</reference>